<accession>A9BCP8</accession>
<sequence>MPLLLSGKEFRDDLESACCLAIQTPLEGGAETRLLRRLKAAGYRTQITSVRGFGDPEVFLLKLHGIRPPHLGHQNIGRNGALGEVQEVIPQLHELLSEEQPLALWLLEGQVLSRSELLALCDLSEKDPQLKIVVEMGGERKLKWQSMRKFLEQ</sequence>
<evidence type="ECO:0000255" key="1">
    <source>
        <dbReference type="HAMAP-Rule" id="MF_01353"/>
    </source>
</evidence>
<proteinExistence type="inferred from homology"/>
<protein>
    <recommendedName>
        <fullName evidence="1">NAD(P)H-quinone oxidoreductase subunit N</fullName>
        <ecNumber evidence="1">7.1.1.-</ecNumber>
    </recommendedName>
    <alternativeName>
        <fullName evidence="1">NAD(P)H dehydrogenase I subunit N</fullName>
        <shortName evidence="1">NDH-1 subunit N</shortName>
        <shortName evidence="1">NDH-N</shortName>
    </alternativeName>
</protein>
<keyword id="KW-0472">Membrane</keyword>
<keyword id="KW-0520">NAD</keyword>
<keyword id="KW-0521">NADP</keyword>
<keyword id="KW-0618">Plastoquinone</keyword>
<keyword id="KW-0874">Quinone</keyword>
<keyword id="KW-1185">Reference proteome</keyword>
<keyword id="KW-0793">Thylakoid</keyword>
<keyword id="KW-1278">Translocase</keyword>
<keyword id="KW-0813">Transport</keyword>
<feature type="chain" id="PRO_0000352221" description="NAD(P)H-quinone oxidoreductase subunit N">
    <location>
        <begin position="1"/>
        <end position="153"/>
    </location>
</feature>
<dbReference type="EC" id="7.1.1.-" evidence="1"/>
<dbReference type="EMBL" id="CP000878">
    <property type="protein sequence ID" value="ABX09610.1"/>
    <property type="molecule type" value="Genomic_DNA"/>
</dbReference>
<dbReference type="RefSeq" id="WP_012196230.1">
    <property type="nucleotide sequence ID" value="NC_009976.1"/>
</dbReference>
<dbReference type="SMR" id="A9BCP8"/>
<dbReference type="STRING" id="93059.P9211_16791"/>
<dbReference type="KEGG" id="pmj:P9211_16791"/>
<dbReference type="eggNOG" id="ENOG5033TWM">
    <property type="taxonomic scope" value="Bacteria"/>
</dbReference>
<dbReference type="HOGENOM" id="CLU_087432_0_0_3"/>
<dbReference type="OrthoDB" id="510798at2"/>
<dbReference type="Proteomes" id="UP000000788">
    <property type="component" value="Chromosome"/>
</dbReference>
<dbReference type="GO" id="GO:0031676">
    <property type="term" value="C:plasma membrane-derived thylakoid membrane"/>
    <property type="evidence" value="ECO:0007669"/>
    <property type="project" value="UniProtKB-SubCell"/>
</dbReference>
<dbReference type="GO" id="GO:0016655">
    <property type="term" value="F:oxidoreductase activity, acting on NAD(P)H, quinone or similar compound as acceptor"/>
    <property type="evidence" value="ECO:0007669"/>
    <property type="project" value="UniProtKB-UniRule"/>
</dbReference>
<dbReference type="GO" id="GO:0048038">
    <property type="term" value="F:quinone binding"/>
    <property type="evidence" value="ECO:0007669"/>
    <property type="project" value="UniProtKB-KW"/>
</dbReference>
<dbReference type="HAMAP" id="MF_01353">
    <property type="entry name" value="NDH1_NDH1N"/>
    <property type="match status" value="1"/>
</dbReference>
<dbReference type="InterPro" id="IPR020874">
    <property type="entry name" value="NAD(P)H-quinone_OxRdtase_su_N"/>
</dbReference>
<dbReference type="PANTHER" id="PTHR35515">
    <property type="entry name" value="NAD(P)H-QUINONE OXIDOREDUCTASE SUBUNIT N, CHLOROPLASTIC"/>
    <property type="match status" value="1"/>
</dbReference>
<dbReference type="PANTHER" id="PTHR35515:SF1">
    <property type="entry name" value="NAD(P)H-QUINONE OXIDOREDUCTASE SUBUNIT N, CHLOROPLASTIC"/>
    <property type="match status" value="1"/>
</dbReference>
<dbReference type="Pfam" id="PF11909">
    <property type="entry name" value="NdhN"/>
    <property type="match status" value="1"/>
</dbReference>
<comment type="function">
    <text evidence="1">NDH-1 shuttles electrons from an unknown electron donor, via FMN and iron-sulfur (Fe-S) centers, to quinones in the respiratory and/or the photosynthetic chain. The immediate electron acceptor for the enzyme in this species is believed to be plastoquinone. Couples the redox reaction to proton translocation, and thus conserves the redox energy in a proton gradient. Cyanobacterial NDH-1 also plays a role in inorganic carbon-concentration.</text>
</comment>
<comment type="catalytic activity">
    <reaction evidence="1">
        <text>a plastoquinone + NADH + (n+1) H(+)(in) = a plastoquinol + NAD(+) + n H(+)(out)</text>
        <dbReference type="Rhea" id="RHEA:42608"/>
        <dbReference type="Rhea" id="RHEA-COMP:9561"/>
        <dbReference type="Rhea" id="RHEA-COMP:9562"/>
        <dbReference type="ChEBI" id="CHEBI:15378"/>
        <dbReference type="ChEBI" id="CHEBI:17757"/>
        <dbReference type="ChEBI" id="CHEBI:57540"/>
        <dbReference type="ChEBI" id="CHEBI:57945"/>
        <dbReference type="ChEBI" id="CHEBI:62192"/>
    </reaction>
</comment>
<comment type="catalytic activity">
    <reaction evidence="1">
        <text>a plastoquinone + NADPH + (n+1) H(+)(in) = a plastoquinol + NADP(+) + n H(+)(out)</text>
        <dbReference type="Rhea" id="RHEA:42612"/>
        <dbReference type="Rhea" id="RHEA-COMP:9561"/>
        <dbReference type="Rhea" id="RHEA-COMP:9562"/>
        <dbReference type="ChEBI" id="CHEBI:15378"/>
        <dbReference type="ChEBI" id="CHEBI:17757"/>
        <dbReference type="ChEBI" id="CHEBI:57783"/>
        <dbReference type="ChEBI" id="CHEBI:58349"/>
        <dbReference type="ChEBI" id="CHEBI:62192"/>
    </reaction>
</comment>
<comment type="subunit">
    <text evidence="1">NDH-1 can be composed of about 15 different subunits; different subcomplexes with different compositions have been identified which probably have different functions.</text>
</comment>
<comment type="subcellular location">
    <subcellularLocation>
        <location evidence="1">Cellular thylakoid membrane</location>
        <topology evidence="1">Peripheral membrane protein</topology>
        <orientation evidence="1">Cytoplasmic side</orientation>
    </subcellularLocation>
</comment>
<comment type="similarity">
    <text evidence="1">Belongs to the complex I NdhN subunit family.</text>
</comment>
<organism>
    <name type="scientific">Prochlorococcus marinus (strain MIT 9211)</name>
    <dbReference type="NCBI Taxonomy" id="93059"/>
    <lineage>
        <taxon>Bacteria</taxon>
        <taxon>Bacillati</taxon>
        <taxon>Cyanobacteriota</taxon>
        <taxon>Cyanophyceae</taxon>
        <taxon>Synechococcales</taxon>
        <taxon>Prochlorococcaceae</taxon>
        <taxon>Prochlorococcus</taxon>
    </lineage>
</organism>
<gene>
    <name evidence="1" type="primary">ndhN</name>
    <name type="ordered locus">P9211_16791</name>
</gene>
<reference key="1">
    <citation type="journal article" date="2007" name="PLoS Genet.">
        <title>Patterns and implications of gene gain and loss in the evolution of Prochlorococcus.</title>
        <authorList>
            <person name="Kettler G.C."/>
            <person name="Martiny A.C."/>
            <person name="Huang K."/>
            <person name="Zucker J."/>
            <person name="Coleman M.L."/>
            <person name="Rodrigue S."/>
            <person name="Chen F."/>
            <person name="Lapidus A."/>
            <person name="Ferriera S."/>
            <person name="Johnson J."/>
            <person name="Steglich C."/>
            <person name="Church G.M."/>
            <person name="Richardson P."/>
            <person name="Chisholm S.W."/>
        </authorList>
    </citation>
    <scope>NUCLEOTIDE SEQUENCE [LARGE SCALE GENOMIC DNA]</scope>
    <source>
        <strain>MIT 9211</strain>
    </source>
</reference>
<name>NDHN_PROM4</name>